<keyword id="KW-0028">Amino-acid biosynthesis</keyword>
<keyword id="KW-0067">ATP-binding</keyword>
<keyword id="KW-0963">Cytoplasm</keyword>
<keyword id="KW-0328">Glycosyltransferase</keyword>
<keyword id="KW-0368">Histidine biosynthesis</keyword>
<keyword id="KW-0460">Magnesium</keyword>
<keyword id="KW-0479">Metal-binding</keyword>
<keyword id="KW-0547">Nucleotide-binding</keyword>
<keyword id="KW-1185">Reference proteome</keyword>
<keyword id="KW-0808">Transferase</keyword>
<organism>
    <name type="scientific">Azobacteroides pseudotrichonymphae genomovar. CFP2</name>
    <dbReference type="NCBI Taxonomy" id="511995"/>
    <lineage>
        <taxon>Bacteria</taxon>
        <taxon>Pseudomonadati</taxon>
        <taxon>Bacteroidota</taxon>
        <taxon>Bacteroidia</taxon>
        <taxon>Bacteroidales</taxon>
        <taxon>Candidatus Azobacteroides</taxon>
    </lineage>
</organism>
<dbReference type="EC" id="2.4.2.17" evidence="1"/>
<dbReference type="EMBL" id="AP010656">
    <property type="protein sequence ID" value="BAG83293.1"/>
    <property type="molecule type" value="Genomic_DNA"/>
</dbReference>
<dbReference type="RefSeq" id="WP_012573054.1">
    <property type="nucleotide sequence ID" value="NC_011565.1"/>
</dbReference>
<dbReference type="SMR" id="B6YQ21"/>
<dbReference type="STRING" id="511995.CFPG_030"/>
<dbReference type="KEGG" id="aps:CFPG_030"/>
<dbReference type="eggNOG" id="COG0040">
    <property type="taxonomic scope" value="Bacteria"/>
</dbReference>
<dbReference type="HOGENOM" id="CLU_038115_1_0_10"/>
<dbReference type="OrthoDB" id="9801867at2"/>
<dbReference type="UniPathway" id="UPA00031">
    <property type="reaction ID" value="UER00006"/>
</dbReference>
<dbReference type="Proteomes" id="UP000000723">
    <property type="component" value="Chromosome"/>
</dbReference>
<dbReference type="GO" id="GO:0005737">
    <property type="term" value="C:cytoplasm"/>
    <property type="evidence" value="ECO:0007669"/>
    <property type="project" value="UniProtKB-SubCell"/>
</dbReference>
<dbReference type="GO" id="GO:0005524">
    <property type="term" value="F:ATP binding"/>
    <property type="evidence" value="ECO:0007669"/>
    <property type="project" value="UniProtKB-KW"/>
</dbReference>
<dbReference type="GO" id="GO:0003879">
    <property type="term" value="F:ATP phosphoribosyltransferase activity"/>
    <property type="evidence" value="ECO:0007669"/>
    <property type="project" value="UniProtKB-UniRule"/>
</dbReference>
<dbReference type="GO" id="GO:0000287">
    <property type="term" value="F:magnesium ion binding"/>
    <property type="evidence" value="ECO:0007669"/>
    <property type="project" value="UniProtKB-UniRule"/>
</dbReference>
<dbReference type="GO" id="GO:0000105">
    <property type="term" value="P:L-histidine biosynthetic process"/>
    <property type="evidence" value="ECO:0007669"/>
    <property type="project" value="UniProtKB-UniRule"/>
</dbReference>
<dbReference type="FunFam" id="3.30.70.120:FF:000002">
    <property type="entry name" value="ATP phosphoribosyltransferase"/>
    <property type="match status" value="1"/>
</dbReference>
<dbReference type="FunFam" id="3.40.190.10:FF:000008">
    <property type="entry name" value="ATP phosphoribosyltransferase"/>
    <property type="match status" value="1"/>
</dbReference>
<dbReference type="Gene3D" id="3.30.70.120">
    <property type="match status" value="1"/>
</dbReference>
<dbReference type="Gene3D" id="3.40.190.10">
    <property type="entry name" value="Periplasmic binding protein-like II"/>
    <property type="match status" value="2"/>
</dbReference>
<dbReference type="HAMAP" id="MF_00079">
    <property type="entry name" value="HisG_Long"/>
    <property type="match status" value="1"/>
</dbReference>
<dbReference type="InterPro" id="IPR020621">
    <property type="entry name" value="ATP-PRT_HisG_long"/>
</dbReference>
<dbReference type="InterPro" id="IPR013820">
    <property type="entry name" value="ATP_PRibTrfase_cat"/>
</dbReference>
<dbReference type="InterPro" id="IPR018198">
    <property type="entry name" value="ATP_PRibTrfase_CS"/>
</dbReference>
<dbReference type="InterPro" id="IPR001348">
    <property type="entry name" value="ATP_PRibTrfase_HisG"/>
</dbReference>
<dbReference type="InterPro" id="IPR013115">
    <property type="entry name" value="HisG_C"/>
</dbReference>
<dbReference type="InterPro" id="IPR011322">
    <property type="entry name" value="N-reg_PII-like_a/b"/>
</dbReference>
<dbReference type="InterPro" id="IPR015867">
    <property type="entry name" value="N-reg_PII/ATP_PRibTrfase_C"/>
</dbReference>
<dbReference type="NCBIfam" id="TIGR00070">
    <property type="entry name" value="hisG"/>
    <property type="match status" value="1"/>
</dbReference>
<dbReference type="NCBIfam" id="TIGR03455">
    <property type="entry name" value="HisG_C-term"/>
    <property type="match status" value="1"/>
</dbReference>
<dbReference type="PANTHER" id="PTHR21403:SF8">
    <property type="entry name" value="ATP PHOSPHORIBOSYLTRANSFERASE"/>
    <property type="match status" value="1"/>
</dbReference>
<dbReference type="PANTHER" id="PTHR21403">
    <property type="entry name" value="ATP PHOSPHORIBOSYLTRANSFERASE ATP-PRTASE"/>
    <property type="match status" value="1"/>
</dbReference>
<dbReference type="Pfam" id="PF01634">
    <property type="entry name" value="HisG"/>
    <property type="match status" value="1"/>
</dbReference>
<dbReference type="Pfam" id="PF08029">
    <property type="entry name" value="HisG_C"/>
    <property type="match status" value="1"/>
</dbReference>
<dbReference type="SUPFAM" id="SSF54913">
    <property type="entry name" value="GlnB-like"/>
    <property type="match status" value="1"/>
</dbReference>
<dbReference type="SUPFAM" id="SSF53850">
    <property type="entry name" value="Periplasmic binding protein-like II"/>
    <property type="match status" value="1"/>
</dbReference>
<dbReference type="PROSITE" id="PS01316">
    <property type="entry name" value="ATP_P_PHORIBOSYLTR"/>
    <property type="match status" value="1"/>
</dbReference>
<evidence type="ECO:0000255" key="1">
    <source>
        <dbReference type="HAMAP-Rule" id="MF_00079"/>
    </source>
</evidence>
<comment type="function">
    <text evidence="1">Catalyzes the condensation of ATP and 5-phosphoribose 1-diphosphate to form N'-(5'-phosphoribosyl)-ATP (PR-ATP). Has a crucial role in the pathway because the rate of histidine biosynthesis seems to be controlled primarily by regulation of HisG enzymatic activity.</text>
</comment>
<comment type="catalytic activity">
    <reaction evidence="1">
        <text>1-(5-phospho-beta-D-ribosyl)-ATP + diphosphate = 5-phospho-alpha-D-ribose 1-diphosphate + ATP</text>
        <dbReference type="Rhea" id="RHEA:18473"/>
        <dbReference type="ChEBI" id="CHEBI:30616"/>
        <dbReference type="ChEBI" id="CHEBI:33019"/>
        <dbReference type="ChEBI" id="CHEBI:58017"/>
        <dbReference type="ChEBI" id="CHEBI:73183"/>
        <dbReference type="EC" id="2.4.2.17"/>
    </reaction>
</comment>
<comment type="cofactor">
    <cofactor evidence="1">
        <name>Mg(2+)</name>
        <dbReference type="ChEBI" id="CHEBI:18420"/>
    </cofactor>
</comment>
<comment type="activity regulation">
    <text evidence="1">Feedback inhibited by histidine.</text>
</comment>
<comment type="pathway">
    <text evidence="1">Amino-acid biosynthesis; L-histidine biosynthesis; L-histidine from 5-phospho-alpha-D-ribose 1-diphosphate: step 1/9.</text>
</comment>
<comment type="subcellular location">
    <subcellularLocation>
        <location evidence="1">Cytoplasm</location>
    </subcellularLocation>
</comment>
<comment type="similarity">
    <text evidence="1">Belongs to the ATP phosphoribosyltransferase family. Long subfamily.</text>
</comment>
<sequence length="283" mass="31574">MLRIAIQTKGRMHEKTAVLLNEVGIRLPAAKRTLLIQSNTFPAEILFLRDDDIPQAVANGVADVGIVGENEFHEKKQEAIVIKQLGFSHCRLSLAIPKEEEYPGLHWFFKKKIATSYPKILSAFLKKNAIEADIHFINGSVEISPGIGLSDAIFDIVSSGSTLISNHLKEVEIVMYSEAILISNKKLDEKKNKILQELIFRIDAVQTANDKKYILLNAPNDSLQEIFQILPGMKSPTIFPLAKKGWSSIHSVISEKQSWEIINKLKNAGAEGILIVPIEKMIL</sequence>
<gene>
    <name evidence="1" type="primary">hisG</name>
    <name type="ordered locus">CFPG_030</name>
</gene>
<reference key="1">
    <citation type="journal article" date="2008" name="Science">
        <title>Genome of an endosymbiont coupling N2 fixation to cellulolysis within RT protist cells in termite gut.</title>
        <authorList>
            <person name="Hongoh Y."/>
            <person name="Sharma V.K."/>
            <person name="Prakash T."/>
            <person name="Noda S."/>
            <person name="Toh H."/>
            <person name="Taylor T.D."/>
            <person name="Kudo T."/>
            <person name="Sakaki Y."/>
            <person name="Toyoda A."/>
            <person name="Hattori M."/>
            <person name="Ohkuma M."/>
        </authorList>
    </citation>
    <scope>NUCLEOTIDE SEQUENCE [LARGE SCALE GENOMIC DNA]</scope>
</reference>
<protein>
    <recommendedName>
        <fullName evidence="1">ATP phosphoribosyltransferase</fullName>
        <shortName evidence="1">ATP-PRT</shortName>
        <shortName evidence="1">ATP-PRTase</shortName>
        <ecNumber evidence="1">2.4.2.17</ecNumber>
    </recommendedName>
</protein>
<feature type="chain" id="PRO_1000092726" description="ATP phosphoribosyltransferase">
    <location>
        <begin position="1"/>
        <end position="283"/>
    </location>
</feature>
<name>HIS1_AZOPC</name>
<proteinExistence type="inferred from homology"/>
<accession>B6YQ21</accession>